<evidence type="ECO:0000255" key="1">
    <source>
        <dbReference type="HAMAP-Rule" id="MF_00321"/>
    </source>
</evidence>
<keyword id="KW-0131">Cell cycle</keyword>
<keyword id="KW-0132">Cell division</keyword>
<keyword id="KW-0342">GTP-binding</keyword>
<keyword id="KW-0460">Magnesium</keyword>
<keyword id="KW-0479">Metal-binding</keyword>
<keyword id="KW-0547">Nucleotide-binding</keyword>
<keyword id="KW-0717">Septation</keyword>
<dbReference type="EMBL" id="CP001025">
    <property type="protein sequence ID" value="ACB62808.1"/>
    <property type="molecule type" value="Genomic_DNA"/>
</dbReference>
<dbReference type="RefSeq" id="WP_012362896.1">
    <property type="nucleotide sequence ID" value="NC_010551.1"/>
</dbReference>
<dbReference type="SMR" id="B1YRR0"/>
<dbReference type="KEGG" id="bac:BamMC406_0307"/>
<dbReference type="HOGENOM" id="CLU_033732_1_1_4"/>
<dbReference type="OrthoDB" id="9804921at2"/>
<dbReference type="Proteomes" id="UP000001680">
    <property type="component" value="Chromosome 1"/>
</dbReference>
<dbReference type="GO" id="GO:0005829">
    <property type="term" value="C:cytosol"/>
    <property type="evidence" value="ECO:0007669"/>
    <property type="project" value="TreeGrafter"/>
</dbReference>
<dbReference type="GO" id="GO:0005525">
    <property type="term" value="F:GTP binding"/>
    <property type="evidence" value="ECO:0007669"/>
    <property type="project" value="UniProtKB-UniRule"/>
</dbReference>
<dbReference type="GO" id="GO:0046872">
    <property type="term" value="F:metal ion binding"/>
    <property type="evidence" value="ECO:0007669"/>
    <property type="project" value="UniProtKB-KW"/>
</dbReference>
<dbReference type="GO" id="GO:0000917">
    <property type="term" value="P:division septum assembly"/>
    <property type="evidence" value="ECO:0007669"/>
    <property type="project" value="UniProtKB-KW"/>
</dbReference>
<dbReference type="CDD" id="cd01876">
    <property type="entry name" value="YihA_EngB"/>
    <property type="match status" value="1"/>
</dbReference>
<dbReference type="FunFam" id="3.40.50.300:FF:000098">
    <property type="entry name" value="Probable GTP-binding protein EngB"/>
    <property type="match status" value="1"/>
</dbReference>
<dbReference type="Gene3D" id="3.40.50.300">
    <property type="entry name" value="P-loop containing nucleotide triphosphate hydrolases"/>
    <property type="match status" value="1"/>
</dbReference>
<dbReference type="HAMAP" id="MF_00321">
    <property type="entry name" value="GTPase_EngB"/>
    <property type="match status" value="1"/>
</dbReference>
<dbReference type="InterPro" id="IPR030393">
    <property type="entry name" value="G_ENGB_dom"/>
</dbReference>
<dbReference type="InterPro" id="IPR006073">
    <property type="entry name" value="GTP-bd"/>
</dbReference>
<dbReference type="InterPro" id="IPR019987">
    <property type="entry name" value="GTP-bd_ribosome_bio_YsxC"/>
</dbReference>
<dbReference type="InterPro" id="IPR027417">
    <property type="entry name" value="P-loop_NTPase"/>
</dbReference>
<dbReference type="NCBIfam" id="TIGR03598">
    <property type="entry name" value="GTPase_YsxC"/>
    <property type="match status" value="1"/>
</dbReference>
<dbReference type="PANTHER" id="PTHR11649:SF13">
    <property type="entry name" value="ENGB-TYPE G DOMAIN-CONTAINING PROTEIN"/>
    <property type="match status" value="1"/>
</dbReference>
<dbReference type="PANTHER" id="PTHR11649">
    <property type="entry name" value="MSS1/TRME-RELATED GTP-BINDING PROTEIN"/>
    <property type="match status" value="1"/>
</dbReference>
<dbReference type="Pfam" id="PF01926">
    <property type="entry name" value="MMR_HSR1"/>
    <property type="match status" value="1"/>
</dbReference>
<dbReference type="SUPFAM" id="SSF52540">
    <property type="entry name" value="P-loop containing nucleoside triphosphate hydrolases"/>
    <property type="match status" value="1"/>
</dbReference>
<dbReference type="PROSITE" id="PS51706">
    <property type="entry name" value="G_ENGB"/>
    <property type="match status" value="1"/>
</dbReference>
<accession>B1YRR0</accession>
<gene>
    <name evidence="1" type="primary">engB</name>
    <name type="ordered locus">BamMC406_0307</name>
</gene>
<protein>
    <recommendedName>
        <fullName evidence="1">Probable GTP-binding protein EngB</fullName>
    </recommendedName>
</protein>
<name>ENGB_BURA4</name>
<feature type="chain" id="PRO_1000115954" description="Probable GTP-binding protein EngB">
    <location>
        <begin position="1"/>
        <end position="219"/>
    </location>
</feature>
<feature type="domain" description="EngB-type G" evidence="1">
    <location>
        <begin position="24"/>
        <end position="207"/>
    </location>
</feature>
<feature type="binding site" evidence="1">
    <location>
        <begin position="32"/>
        <end position="39"/>
    </location>
    <ligand>
        <name>GTP</name>
        <dbReference type="ChEBI" id="CHEBI:37565"/>
    </ligand>
</feature>
<feature type="binding site" evidence="1">
    <location>
        <position position="39"/>
    </location>
    <ligand>
        <name>Mg(2+)</name>
        <dbReference type="ChEBI" id="CHEBI:18420"/>
    </ligand>
</feature>
<feature type="binding site" evidence="1">
    <location>
        <begin position="59"/>
        <end position="63"/>
    </location>
    <ligand>
        <name>GTP</name>
        <dbReference type="ChEBI" id="CHEBI:37565"/>
    </ligand>
</feature>
<feature type="binding site" evidence="1">
    <location>
        <position position="61"/>
    </location>
    <ligand>
        <name>Mg(2+)</name>
        <dbReference type="ChEBI" id="CHEBI:18420"/>
    </ligand>
</feature>
<feature type="binding site" evidence="1">
    <location>
        <begin position="81"/>
        <end position="84"/>
    </location>
    <ligand>
        <name>GTP</name>
        <dbReference type="ChEBI" id="CHEBI:37565"/>
    </ligand>
</feature>
<feature type="binding site" evidence="1">
    <location>
        <begin position="148"/>
        <end position="151"/>
    </location>
    <ligand>
        <name>GTP</name>
        <dbReference type="ChEBI" id="CHEBI:37565"/>
    </ligand>
</feature>
<feature type="binding site" evidence="1">
    <location>
        <begin position="186"/>
        <end position="188"/>
    </location>
    <ligand>
        <name>GTP</name>
        <dbReference type="ChEBI" id="CHEBI:37565"/>
    </ligand>
</feature>
<organism>
    <name type="scientific">Burkholderia ambifaria (strain MC40-6)</name>
    <dbReference type="NCBI Taxonomy" id="398577"/>
    <lineage>
        <taxon>Bacteria</taxon>
        <taxon>Pseudomonadati</taxon>
        <taxon>Pseudomonadota</taxon>
        <taxon>Betaproteobacteria</taxon>
        <taxon>Burkholderiales</taxon>
        <taxon>Burkholderiaceae</taxon>
        <taxon>Burkholderia</taxon>
        <taxon>Burkholderia cepacia complex</taxon>
    </lineage>
</organism>
<comment type="function">
    <text evidence="1">Necessary for normal cell division and for the maintenance of normal septation.</text>
</comment>
<comment type="cofactor">
    <cofactor evidence="1">
        <name>Mg(2+)</name>
        <dbReference type="ChEBI" id="CHEBI:18420"/>
    </cofactor>
</comment>
<comment type="similarity">
    <text evidence="1">Belongs to the TRAFAC class TrmE-Era-EngA-EngB-Septin-like GTPase superfamily. EngB GTPase family.</text>
</comment>
<proteinExistence type="inferred from homology"/>
<sequence length="219" mass="24387">MAFLLHQARFYTTVNHLRDLPPTVQPEIAFAGRSNAGKSTAINVLCNQKRLAFASKTPGRTQHINYFSVGPAAEPVANLVDLPGYGYAEVPGAAKAHWEMLLSSYLATRSQLCGLILMMDSRRPLTDLDRRMIEWFVPTGKPIHTLLTKCDKLTRQESINALRNTQKGLDAYREQGVKGKLTVQLFSALKRTGLDEAHELIESWVRPSVADEKSEPVAQ</sequence>
<reference key="1">
    <citation type="submission" date="2008-04" db="EMBL/GenBank/DDBJ databases">
        <title>Complete sequence of chromosome 1 of Burkholderia ambifaria MC40-6.</title>
        <authorList>
            <person name="Copeland A."/>
            <person name="Lucas S."/>
            <person name="Lapidus A."/>
            <person name="Glavina del Rio T."/>
            <person name="Dalin E."/>
            <person name="Tice H."/>
            <person name="Pitluck S."/>
            <person name="Chain P."/>
            <person name="Malfatti S."/>
            <person name="Shin M."/>
            <person name="Vergez L."/>
            <person name="Lang D."/>
            <person name="Schmutz J."/>
            <person name="Larimer F."/>
            <person name="Land M."/>
            <person name="Hauser L."/>
            <person name="Kyrpides N."/>
            <person name="Lykidis A."/>
            <person name="Ramette A."/>
            <person name="Konstantinidis K."/>
            <person name="Tiedje J."/>
            <person name="Richardson P."/>
        </authorList>
    </citation>
    <scope>NUCLEOTIDE SEQUENCE [LARGE SCALE GENOMIC DNA]</scope>
    <source>
        <strain>MC40-6</strain>
    </source>
</reference>